<name>FIBA_ODOHE</name>
<reference key="1">
    <citation type="journal article" date="1967" name="Arch. Biochem. Biophys.">
        <title>Amino acid sequence studies on artiodactyl fibrinopeptides. I. Dromedary camel, mule deer, and cape buffalo.</title>
        <authorList>
            <person name="Doolittle R.F."/>
            <person name="Schubert D."/>
            <person name="Schwartz S.A."/>
        </authorList>
    </citation>
    <scope>PROTEIN SEQUENCE</scope>
</reference>
<protein>
    <recommendedName>
        <fullName>Fibrinogen alpha chain</fullName>
    </recommendedName>
    <component>
        <recommendedName>
            <fullName>Fibrinopeptide A</fullName>
        </recommendedName>
    </component>
</protein>
<feature type="peptide" id="PRO_0000009033" description="Fibrinopeptide A">
    <location>
        <begin position="1"/>
        <end position="16"/>
    </location>
</feature>
<feature type="non-terminal residue">
    <location>
        <position position="16"/>
    </location>
</feature>
<sequence length="16" mass="1519">SDPAGGEFLAEGGGVR</sequence>
<accession>P14459</accession>
<gene>
    <name type="primary">FGA</name>
</gene>
<dbReference type="GO" id="GO:0005576">
    <property type="term" value="C:extracellular region"/>
    <property type="evidence" value="ECO:0007669"/>
    <property type="project" value="UniProtKB-SubCell"/>
</dbReference>
<dbReference type="GO" id="GO:0002250">
    <property type="term" value="P:adaptive immune response"/>
    <property type="evidence" value="ECO:0007669"/>
    <property type="project" value="UniProtKB-KW"/>
</dbReference>
<dbReference type="GO" id="GO:0007596">
    <property type="term" value="P:blood coagulation"/>
    <property type="evidence" value="ECO:0007669"/>
    <property type="project" value="UniProtKB-KW"/>
</dbReference>
<dbReference type="GO" id="GO:0045087">
    <property type="term" value="P:innate immune response"/>
    <property type="evidence" value="ECO:0007669"/>
    <property type="project" value="UniProtKB-KW"/>
</dbReference>
<keyword id="KW-1064">Adaptive immunity</keyword>
<keyword id="KW-0094">Blood coagulation</keyword>
<keyword id="KW-0175">Coiled coil</keyword>
<keyword id="KW-0903">Direct protein sequencing</keyword>
<keyword id="KW-1015">Disulfide bond</keyword>
<keyword id="KW-0356">Hemostasis</keyword>
<keyword id="KW-0391">Immunity</keyword>
<keyword id="KW-0399">Innate immunity</keyword>
<keyword id="KW-0964">Secreted</keyword>
<evidence type="ECO:0000250" key="1">
    <source>
        <dbReference type="UniProtKB" id="E9PV24"/>
    </source>
</evidence>
<evidence type="ECO:0000250" key="2">
    <source>
        <dbReference type="UniProtKB" id="P02671"/>
    </source>
</evidence>
<organism>
    <name type="scientific">Odocoileus hemionus</name>
    <name type="common">Mule deer</name>
    <name type="synonym">Cervus hemionus</name>
    <dbReference type="NCBI Taxonomy" id="9872"/>
    <lineage>
        <taxon>Eukaryota</taxon>
        <taxon>Metazoa</taxon>
        <taxon>Chordata</taxon>
        <taxon>Craniata</taxon>
        <taxon>Vertebrata</taxon>
        <taxon>Euteleostomi</taxon>
        <taxon>Mammalia</taxon>
        <taxon>Eutheria</taxon>
        <taxon>Laurasiatheria</taxon>
        <taxon>Artiodactyla</taxon>
        <taxon>Ruminantia</taxon>
        <taxon>Pecora</taxon>
        <taxon>Cervidae</taxon>
        <taxon>Odocoileinae</taxon>
        <taxon>Odocoileus</taxon>
    </lineage>
</organism>
<comment type="function">
    <text evidence="1">Cleaved by the protease thrombin to yield monomers which, together with fibrinogen beta (FGB) and fibrinogen gamma (FGG), polymerize to form an insoluble fibrin matrix. Fibrin has a major function in hemostasis as one of the primary components of blood clots. In addition, functions during the early stages of wound repair to stabilize the lesion and guide cell migration during re-epithelialization. Was originally thought to be essential for platelet aggregation, based on in vitro studies using anticoagulated blood. However, subsequent studies have shown that it is not absolutely required for thrombus formation in vivo. Enhances expression of SELP in activated platelets via an ITGB3-dependent pathway. Maternal fibrinogen is essential for successful pregnancy. Fibrin deposition is also associated with infection, where it protects against IFNG-mediated hemorrhage. May also facilitate the immune response via both innate and T-cell mediated pathways.</text>
</comment>
<comment type="subunit">
    <text evidence="2">Heterohexamer; disulfide linked. Contains 2 sets of 3 non-identical chains (alpha, beta and gamma). The 2 heterotrimers are in head to head conformation with the N-termini in a small central domain (By similarity).</text>
</comment>
<comment type="subcellular location">
    <subcellularLocation>
        <location>Secreted</location>
    </subcellularLocation>
</comment>
<comment type="domain">
    <text evidence="2">A long coiled coil structure formed by 3 polypeptide chains connects the central nodule to the C-terminal domains (distal nodules). The long C-terminal ends of the alpha chains fold back, contributing a fourth strand to the coiled coil structure.</text>
</comment>
<comment type="PTM">
    <text>Conversion of fibrinogen to fibrin is triggered by thrombin, which cleaves fibrinopeptides A and B from alpha and beta chains, and thus exposes the N-terminal polymerization sites responsible for the formation of the soft clot. The soft clot is converted into the hard clot by factor XIIIA which catalyzes the epsilon-(gamma-glutamyl)lysine cross-linking between gamma chains (stronger) and between alpha chains (weaker) of different monomers.</text>
</comment>
<comment type="PTM">
    <text>Forms F13A-mediated cross-links between a glutamine and the epsilon-amino group of a lysine residue, forming fibronectin-fibrinogen heteropolymers.</text>
</comment>
<proteinExistence type="evidence at protein level"/>